<protein>
    <recommendedName>
        <fullName>Flagellar P-ring protein</fullName>
    </recommendedName>
    <alternativeName>
        <fullName>Basal body P-ring protein</fullName>
    </alternativeName>
</protein>
<dbReference type="EMBL" id="U00096">
    <property type="protein sequence ID" value="AAC74164.1"/>
    <property type="molecule type" value="Genomic_DNA"/>
</dbReference>
<dbReference type="EMBL" id="AP009048">
    <property type="protein sequence ID" value="BAA35889.1"/>
    <property type="molecule type" value="Genomic_DNA"/>
</dbReference>
<dbReference type="PIR" id="E64851">
    <property type="entry name" value="E64851"/>
</dbReference>
<dbReference type="RefSeq" id="NP_415598.3">
    <property type="nucleotide sequence ID" value="NC_000913.3"/>
</dbReference>
<dbReference type="RefSeq" id="WP_000589326.1">
    <property type="nucleotide sequence ID" value="NZ_STEB01000016.1"/>
</dbReference>
<dbReference type="SMR" id="P0A6S3"/>
<dbReference type="BioGRID" id="4261032">
    <property type="interactions" value="18"/>
</dbReference>
<dbReference type="BioGRID" id="851851">
    <property type="interactions" value="1"/>
</dbReference>
<dbReference type="DIP" id="DIP-47979N"/>
<dbReference type="FunCoup" id="P0A6S3">
    <property type="interactions" value="78"/>
</dbReference>
<dbReference type="IntAct" id="P0A6S3">
    <property type="interactions" value="5"/>
</dbReference>
<dbReference type="STRING" id="511145.b1080"/>
<dbReference type="PaxDb" id="511145-b1080"/>
<dbReference type="DNASU" id="947534"/>
<dbReference type="EnsemblBacteria" id="AAC74164">
    <property type="protein sequence ID" value="AAC74164"/>
    <property type="gene ID" value="b1080"/>
</dbReference>
<dbReference type="GeneID" id="75203667"/>
<dbReference type="GeneID" id="947534"/>
<dbReference type="KEGG" id="ecj:JW1067"/>
<dbReference type="KEGG" id="eco:b1080"/>
<dbReference type="KEGG" id="ecoc:C3026_06545"/>
<dbReference type="PATRIC" id="fig|1411691.4.peg.1188"/>
<dbReference type="EchoBASE" id="EB4162"/>
<dbReference type="eggNOG" id="COG1706">
    <property type="taxonomic scope" value="Bacteria"/>
</dbReference>
<dbReference type="HOGENOM" id="CLU_045235_1_0_6"/>
<dbReference type="InParanoid" id="P0A6S3"/>
<dbReference type="OMA" id="LDTAHNT"/>
<dbReference type="OrthoDB" id="9786431at2"/>
<dbReference type="PhylomeDB" id="P0A6S3"/>
<dbReference type="BioCyc" id="EcoCyc:FLGI-FLAGELLAR-P-RING"/>
<dbReference type="PRO" id="PR:P0A6S3"/>
<dbReference type="Proteomes" id="UP000000625">
    <property type="component" value="Chromosome"/>
</dbReference>
<dbReference type="GO" id="GO:0009428">
    <property type="term" value="C:bacterial-type flagellum basal body, distal rod, P ring"/>
    <property type="evidence" value="ECO:0000315"/>
    <property type="project" value="EcoCyc"/>
</dbReference>
<dbReference type="GO" id="GO:0030288">
    <property type="term" value="C:outer membrane-bounded periplasmic space"/>
    <property type="evidence" value="ECO:0007669"/>
    <property type="project" value="InterPro"/>
</dbReference>
<dbReference type="GO" id="GO:0005198">
    <property type="term" value="F:structural molecule activity"/>
    <property type="evidence" value="ECO:0007669"/>
    <property type="project" value="InterPro"/>
</dbReference>
<dbReference type="GO" id="GO:0071973">
    <property type="term" value="P:bacterial-type flagellum-dependent cell motility"/>
    <property type="evidence" value="ECO:0000315"/>
    <property type="project" value="EcoCyc"/>
</dbReference>
<dbReference type="GO" id="GO:0006974">
    <property type="term" value="P:DNA damage response"/>
    <property type="evidence" value="ECO:0000270"/>
    <property type="project" value="EcoliWiki"/>
</dbReference>
<dbReference type="HAMAP" id="MF_00416">
    <property type="entry name" value="FlgI"/>
    <property type="match status" value="1"/>
</dbReference>
<dbReference type="InterPro" id="IPR001782">
    <property type="entry name" value="Flag_FlgI"/>
</dbReference>
<dbReference type="NCBIfam" id="NF003676">
    <property type="entry name" value="PRK05303.1"/>
    <property type="match status" value="1"/>
</dbReference>
<dbReference type="PANTHER" id="PTHR30381">
    <property type="entry name" value="FLAGELLAR P-RING PERIPLASMIC PROTEIN FLGI"/>
    <property type="match status" value="1"/>
</dbReference>
<dbReference type="PANTHER" id="PTHR30381:SF0">
    <property type="entry name" value="FLAGELLAR P-RING PROTEIN"/>
    <property type="match status" value="1"/>
</dbReference>
<dbReference type="Pfam" id="PF02119">
    <property type="entry name" value="FlgI"/>
    <property type="match status" value="1"/>
</dbReference>
<dbReference type="PRINTS" id="PR01010">
    <property type="entry name" value="FLGPRINGFLGI"/>
</dbReference>
<comment type="function">
    <text>Assembles around the rod to form the L-ring and probably protects the motor/basal body from shearing forces during rotation.</text>
</comment>
<comment type="subunit">
    <text>The basal body constitutes a major portion of the flagellar organelle and consists of four rings (L,P,S, and M) mounted on a central rod.</text>
</comment>
<comment type="subcellular location">
    <subcellularLocation>
        <location>Periplasm</location>
    </subcellularLocation>
    <subcellularLocation>
        <location>Bacterial flagellum basal body</location>
    </subcellularLocation>
</comment>
<comment type="similarity">
    <text evidence="2">Belongs to the FlgI family.</text>
</comment>
<sequence>MIKFLSALILLLVTTAAQAERIRDLTSVQGVRQNSLIGYGLVVGLDGTGDQTTQTPFTTQTLNNMLSQLGITVPTGTNMQLKNVAAVMVTASLPPFGRQGQTIDVVVSSMGNAKSLRGGTLLMTPLKGVDSQVYALAQGNILVGGAGASAGGSSVQVNQLNGGRITNGAVIERELPSQFGVGNTLNLQLNDEDFSMAQQIADTINRVRGYGSATALDARTIQVRVPSGNSSQVRFLADIQNMQVNVTPQDAKVVINSRTGSVVMNREVTLDSCAVAQGNLSVTVNRQANVSQPDTPFGGGQTVVTPQTQIDLRQSGGSLQSVRSSASLNNVVRALNALGATPMDLMSILQSMQSAGCLRAKLEII</sequence>
<organism>
    <name type="scientific">Escherichia coli (strain K12)</name>
    <dbReference type="NCBI Taxonomy" id="83333"/>
    <lineage>
        <taxon>Bacteria</taxon>
        <taxon>Pseudomonadati</taxon>
        <taxon>Pseudomonadota</taxon>
        <taxon>Gammaproteobacteria</taxon>
        <taxon>Enterobacterales</taxon>
        <taxon>Enterobacteriaceae</taxon>
        <taxon>Escherichia</taxon>
    </lineage>
</organism>
<gene>
    <name type="primary">flgI</name>
    <name type="synonym">fla FIX</name>
    <name type="synonym">flaM</name>
    <name type="ordered locus">b1080</name>
    <name type="ordered locus">JW1067</name>
</gene>
<accession>P0A6S3</accession>
<accession>P75941</accession>
<reference key="1">
    <citation type="journal article" date="1996" name="DNA Res.">
        <title>A 718-kb DNA sequence of the Escherichia coli K-12 genome corresponding to the 12.7-28.0 min region on the linkage map.</title>
        <authorList>
            <person name="Oshima T."/>
            <person name="Aiba H."/>
            <person name="Baba T."/>
            <person name="Fujita K."/>
            <person name="Hayashi K."/>
            <person name="Honjo A."/>
            <person name="Ikemoto K."/>
            <person name="Inada T."/>
            <person name="Itoh T."/>
            <person name="Kajihara M."/>
            <person name="Kanai K."/>
            <person name="Kashimoto K."/>
            <person name="Kimura S."/>
            <person name="Kitagawa M."/>
            <person name="Makino K."/>
            <person name="Masuda S."/>
            <person name="Miki T."/>
            <person name="Mizobuchi K."/>
            <person name="Mori H."/>
            <person name="Motomura K."/>
            <person name="Nakamura Y."/>
            <person name="Nashimoto H."/>
            <person name="Nishio Y."/>
            <person name="Saito N."/>
            <person name="Sampei G."/>
            <person name="Seki Y."/>
            <person name="Tagami H."/>
            <person name="Takemoto K."/>
            <person name="Wada C."/>
            <person name="Yamamoto Y."/>
            <person name="Yano M."/>
            <person name="Horiuchi T."/>
        </authorList>
    </citation>
    <scope>NUCLEOTIDE SEQUENCE [LARGE SCALE GENOMIC DNA]</scope>
    <source>
        <strain>K12 / W3110 / ATCC 27325 / DSM 5911</strain>
    </source>
</reference>
<reference key="2">
    <citation type="journal article" date="1997" name="Science">
        <title>The complete genome sequence of Escherichia coli K-12.</title>
        <authorList>
            <person name="Blattner F.R."/>
            <person name="Plunkett G. III"/>
            <person name="Bloch C.A."/>
            <person name="Perna N.T."/>
            <person name="Burland V."/>
            <person name="Riley M."/>
            <person name="Collado-Vides J."/>
            <person name="Glasner J.D."/>
            <person name="Rode C.K."/>
            <person name="Mayhew G.F."/>
            <person name="Gregor J."/>
            <person name="Davis N.W."/>
            <person name="Kirkpatrick H.A."/>
            <person name="Goeden M.A."/>
            <person name="Rose D.J."/>
            <person name="Mau B."/>
            <person name="Shao Y."/>
        </authorList>
    </citation>
    <scope>NUCLEOTIDE SEQUENCE [LARGE SCALE GENOMIC DNA]</scope>
    <source>
        <strain>K12 / MG1655 / ATCC 47076</strain>
    </source>
</reference>
<reference key="3">
    <citation type="journal article" date="2006" name="Mol. Syst. Biol.">
        <title>Highly accurate genome sequences of Escherichia coli K-12 strains MG1655 and W3110.</title>
        <authorList>
            <person name="Hayashi K."/>
            <person name="Morooka N."/>
            <person name="Yamamoto Y."/>
            <person name="Fujita K."/>
            <person name="Isono K."/>
            <person name="Choi S."/>
            <person name="Ohtsubo E."/>
            <person name="Baba T."/>
            <person name="Wanner B.L."/>
            <person name="Mori H."/>
            <person name="Horiuchi T."/>
        </authorList>
    </citation>
    <scope>NUCLEOTIDE SEQUENCE [LARGE SCALE GENOMIC DNA]</scope>
    <source>
        <strain>K12 / W3110 / ATCC 27325 / DSM 5911</strain>
    </source>
</reference>
<proteinExistence type="inferred from homology"/>
<keyword id="KW-0975">Bacterial flagellum</keyword>
<keyword id="KW-0574">Periplasm</keyword>
<keyword id="KW-1185">Reference proteome</keyword>
<keyword id="KW-0732">Signal</keyword>
<evidence type="ECO:0000250" key="1"/>
<evidence type="ECO:0000305" key="2"/>
<name>FLGI_ECOLI</name>
<feature type="signal peptide" evidence="1">
    <location>
        <begin position="1"/>
        <end position="19"/>
    </location>
</feature>
<feature type="chain" id="PRO_0000009500" description="Flagellar P-ring protein">
    <location>
        <begin position="20"/>
        <end position="365"/>
    </location>
</feature>